<proteinExistence type="evidence at protein level"/>
<comment type="function">
    <text evidence="1 2">Acts as a ribosome collision sensor (PubMed:35264790). Detects stalled/collided disomes (pairs of ribosomes where the leading ribosome is stalled and a second ribosome has collided with it) and endonucleolytically cleaves mRNA at the 5' boundary of the stalled ribosome (PubMed:35264790). Stalled/collided disomes form a new interface (primarily via the 30S subunits) that binds SmrB (PubMed:35264790). Cleaved mRNA becomes available for tmRNA ligation, leading to ribosomal subunit dissociation and rescue of stalled ribosomes (PubMed:35264790).</text>
</comment>
<comment type="activity regulation">
    <text evidence="5">Correct positioning in stalled/collided ribosomes is probably required for activation.</text>
</comment>
<comment type="subunit">
    <text evidence="1 2 5">Associates with collided ribosomes, but not with correctly translating polysomes (PubMed:35264790). In stalled/collided ribosomes specifically contacts ribosomal proteins uS2, uS3 and uS5 in the collided ribosome and uS11, bS21 and 16S rRNA helices h26 and h40 in the leading (stalled) ribosome (Probable) (PubMed:35264790).</text>
</comment>
<comment type="domain">
    <text evidence="2">Has a probably flexible N-terminal domain and a conserved C-terminal SMR domain; the N-terminal domain is required for ribosome binding via uS2.</text>
</comment>
<comment type="disruption phenotype">
    <text evidence="2">Significantly increased readthrough of strong stalling motifs. Hypersensitive to erythromycin (which increases stalling at specific mRNA sites).</text>
</comment>
<comment type="similarity">
    <text evidence="1">Belongs to the SmrB family.</text>
</comment>
<name>SMRB_ECOLI</name>
<gene>
    <name evidence="1 3" type="primary">smrB</name>
    <name evidence="4" type="synonym">yfcN</name>
    <name type="ordered locus">b2331</name>
    <name type="ordered locus">JW2328</name>
</gene>
<accession>P0A8B2</accession>
<accession>P77458</accession>
<keyword id="KW-0002">3D-structure</keyword>
<keyword id="KW-0255">Endonuclease</keyword>
<keyword id="KW-0378">Hydrolase</keyword>
<keyword id="KW-0540">Nuclease</keyword>
<keyword id="KW-1185">Reference proteome</keyword>
<keyword id="KW-0694">RNA-binding</keyword>
<keyword id="KW-0699">rRNA-binding</keyword>
<feature type="chain" id="PRO_0000214551" description="Ribosome rescue factor SmrB">
    <location>
        <begin position="1"/>
        <end position="183"/>
    </location>
</feature>
<feature type="domain" description="Smr" evidence="1">
    <location>
        <begin position="98"/>
        <end position="173"/>
    </location>
</feature>
<feature type="region of interest" description="N-terminal domain, required for ribosome-binding" evidence="2">
    <location>
        <begin position="1"/>
        <end position="97"/>
    </location>
</feature>
<feature type="mutagenesis site" description="Loss of ribosome rescue ability, reduced cleavage of collided disomes." evidence="2">
    <original>DLH</original>
    <variation>ALA</variation>
    <location>
        <begin position="99"/>
        <end position="101"/>
    </location>
</feature>
<feature type="mutagenesis site" description="No effect on ribosome rescue." evidence="2">
    <original>H</original>
    <variation>A</variation>
    <location>
        <position position="133"/>
    </location>
</feature>
<reference key="1">
    <citation type="journal article" date="1997" name="DNA Res.">
        <title>Construction of a contiguous 874-kb sequence of the Escherichia coli-K12 genome corresponding to 50.0-68.8 min on the linkage map and analysis of its sequence features.</title>
        <authorList>
            <person name="Yamamoto Y."/>
            <person name="Aiba H."/>
            <person name="Baba T."/>
            <person name="Hayashi K."/>
            <person name="Inada T."/>
            <person name="Isono K."/>
            <person name="Itoh T."/>
            <person name="Kimura S."/>
            <person name="Kitagawa M."/>
            <person name="Makino K."/>
            <person name="Miki T."/>
            <person name="Mitsuhashi N."/>
            <person name="Mizobuchi K."/>
            <person name="Mori H."/>
            <person name="Nakade S."/>
            <person name="Nakamura Y."/>
            <person name="Nashimoto H."/>
            <person name="Oshima T."/>
            <person name="Oyama S."/>
            <person name="Saito N."/>
            <person name="Sampei G."/>
            <person name="Satoh Y."/>
            <person name="Sivasundaram S."/>
            <person name="Tagami H."/>
            <person name="Takahashi H."/>
            <person name="Takeda J."/>
            <person name="Takemoto K."/>
            <person name="Uehara K."/>
            <person name="Wada C."/>
            <person name="Yamagata S."/>
            <person name="Horiuchi T."/>
        </authorList>
    </citation>
    <scope>NUCLEOTIDE SEQUENCE [LARGE SCALE GENOMIC DNA]</scope>
    <source>
        <strain>K12 / W3110 / ATCC 27325 / DSM 5911</strain>
    </source>
</reference>
<reference key="2">
    <citation type="journal article" date="1997" name="Science">
        <title>The complete genome sequence of Escherichia coli K-12.</title>
        <authorList>
            <person name="Blattner F.R."/>
            <person name="Plunkett G. III"/>
            <person name="Bloch C.A."/>
            <person name="Perna N.T."/>
            <person name="Burland V."/>
            <person name="Riley M."/>
            <person name="Collado-Vides J."/>
            <person name="Glasner J.D."/>
            <person name="Rode C.K."/>
            <person name="Mayhew G.F."/>
            <person name="Gregor J."/>
            <person name="Davis N.W."/>
            <person name="Kirkpatrick H.A."/>
            <person name="Goeden M.A."/>
            <person name="Rose D.J."/>
            <person name="Mau B."/>
            <person name="Shao Y."/>
        </authorList>
    </citation>
    <scope>NUCLEOTIDE SEQUENCE [LARGE SCALE GENOMIC DNA]</scope>
    <source>
        <strain>K12 / MG1655 / ATCC 47076</strain>
    </source>
</reference>
<reference key="3">
    <citation type="journal article" date="2006" name="Mol. Syst. Biol.">
        <title>Highly accurate genome sequences of Escherichia coli K-12 strains MG1655 and W3110.</title>
        <authorList>
            <person name="Hayashi K."/>
            <person name="Morooka N."/>
            <person name="Yamamoto Y."/>
            <person name="Fujita K."/>
            <person name="Isono K."/>
            <person name="Choi S."/>
            <person name="Ohtsubo E."/>
            <person name="Baba T."/>
            <person name="Wanner B.L."/>
            <person name="Mori H."/>
            <person name="Horiuchi T."/>
        </authorList>
    </citation>
    <scope>NUCLEOTIDE SEQUENCE [LARGE SCALE GENOMIC DNA]</scope>
    <source>
        <strain>K12 / W3110 / ATCC 27325 / DSM 5911</strain>
    </source>
</reference>
<reference evidence="6 7" key="4">
    <citation type="journal article" date="2022" name="Nature">
        <title>Ribosome collisions induce mRNA cleavage and ribosome rescue in bacteria.</title>
        <authorList>
            <person name="Saito K."/>
            <person name="Kratzat H."/>
            <person name="Campbell A."/>
            <person name="Buschauer R."/>
            <person name="Burroughs A.M."/>
            <person name="Berninghausen O."/>
            <person name="Aravind L."/>
            <person name="Green R."/>
            <person name="Beckmann R."/>
            <person name="Buskirk A.R."/>
        </authorList>
    </citation>
    <scope>STRUCTURE BY ELECTRON MICROSCOPY (3.37 ANGSTROMS)</scope>
    <scope>FUNCTION</scope>
    <scope>CATALYTIC ACTIVITY</scope>
    <scope>ACTIVITY REGULATION</scope>
    <scope>SUBUNIT</scope>
    <scope>DISRUPTION PHENOTYPE</scope>
    <scope>RRNA-BINDING</scope>
    <scope>MUTAGENESIS OF 99-ASP--HIS-101 AND HIS-133</scope>
    <source>
        <strain>K12 / MG1655 / ATCC 47076</strain>
    </source>
</reference>
<sequence length="183" mass="21013">MKKKTTLSEEDQALFRQLMAGTRKIKQDTIVHRPQRKKISEVPVKRLIQEQADASHYFSDEFQPLLNTEGPVKYVRPDVSHFEAKKLRRGDYSPELFLDLHGLTQLQAKQELGALIAACRREHVFCACVMHGHGKHILKQQTPLWLAQHPHVMAFHQAPKEYGGDAALLVLIEVEEWLPPELP</sequence>
<protein>
    <recommendedName>
        <fullName evidence="1 3">Ribosome rescue factor SmrB</fullName>
        <ecNumber evidence="1 3">3.1.-.-</ecNumber>
    </recommendedName>
</protein>
<evidence type="ECO:0000255" key="1">
    <source>
        <dbReference type="HAMAP-Rule" id="MF_01042"/>
    </source>
</evidence>
<evidence type="ECO:0000269" key="2">
    <source>
    </source>
</evidence>
<evidence type="ECO:0000303" key="3">
    <source>
    </source>
</evidence>
<evidence type="ECO:0000303" key="4">
    <source>
    </source>
</evidence>
<evidence type="ECO:0000305" key="5">
    <source>
    </source>
</evidence>
<evidence type="ECO:0007744" key="6">
    <source>
        <dbReference type="PDB" id="7QGN"/>
    </source>
</evidence>
<evidence type="ECO:0007744" key="7">
    <source>
        <dbReference type="PDB" id="7QGR"/>
    </source>
</evidence>
<organism>
    <name type="scientific">Escherichia coli (strain K12)</name>
    <dbReference type="NCBI Taxonomy" id="83333"/>
    <lineage>
        <taxon>Bacteria</taxon>
        <taxon>Pseudomonadati</taxon>
        <taxon>Pseudomonadota</taxon>
        <taxon>Gammaproteobacteria</taxon>
        <taxon>Enterobacterales</taxon>
        <taxon>Enterobacteriaceae</taxon>
        <taxon>Escherichia</taxon>
    </lineage>
</organism>
<dbReference type="EC" id="3.1.-.-" evidence="1 3"/>
<dbReference type="EMBL" id="U00096">
    <property type="protein sequence ID" value="AAC75391.1"/>
    <property type="molecule type" value="Genomic_DNA"/>
</dbReference>
<dbReference type="EMBL" id="AP009048">
    <property type="protein sequence ID" value="BAA16189.1"/>
    <property type="molecule type" value="Genomic_DNA"/>
</dbReference>
<dbReference type="PIR" id="A65006">
    <property type="entry name" value="A65006"/>
</dbReference>
<dbReference type="RefSeq" id="NP_416834.1">
    <property type="nucleotide sequence ID" value="NC_000913.3"/>
</dbReference>
<dbReference type="RefSeq" id="WP_000730806.1">
    <property type="nucleotide sequence ID" value="NZ_STEB01000008.1"/>
</dbReference>
<dbReference type="PDB" id="7QGN">
    <property type="method" value="EM"/>
    <property type="resolution" value="3.37 A"/>
    <property type="chains" value="B=1-183"/>
</dbReference>
<dbReference type="PDB" id="7QGR">
    <property type="method" value="EM"/>
    <property type="resolution" value="5.70 A"/>
    <property type="chains" value="v=1-182"/>
</dbReference>
<dbReference type="PDBsum" id="7QGN"/>
<dbReference type="PDBsum" id="7QGR"/>
<dbReference type="SMR" id="P0A8B2"/>
<dbReference type="BioGRID" id="4260529">
    <property type="interactions" value="12"/>
</dbReference>
<dbReference type="BioGRID" id="849247">
    <property type="interactions" value="6"/>
</dbReference>
<dbReference type="DIP" id="DIP-48186N"/>
<dbReference type="FunCoup" id="P0A8B2">
    <property type="interactions" value="23"/>
</dbReference>
<dbReference type="IntAct" id="P0A8B2">
    <property type="interactions" value="6"/>
</dbReference>
<dbReference type="STRING" id="511145.b2331"/>
<dbReference type="jPOST" id="P0A8B2"/>
<dbReference type="PaxDb" id="511145-b2331"/>
<dbReference type="DNASU" id="944847"/>
<dbReference type="EnsemblBacteria" id="AAC75391">
    <property type="protein sequence ID" value="AAC75391"/>
    <property type="gene ID" value="b2331"/>
</dbReference>
<dbReference type="GeneID" id="93774844"/>
<dbReference type="GeneID" id="944847"/>
<dbReference type="KEGG" id="ecj:JW2328"/>
<dbReference type="KEGG" id="eco:b2331"/>
<dbReference type="KEGG" id="ecoc:C3026_12985"/>
<dbReference type="PATRIC" id="fig|1411691.4.peg.4401"/>
<dbReference type="EchoBASE" id="EB3870"/>
<dbReference type="eggNOG" id="COG2840">
    <property type="taxonomic scope" value="Bacteria"/>
</dbReference>
<dbReference type="HOGENOM" id="CLU_055978_4_0_6"/>
<dbReference type="InParanoid" id="P0A8B2"/>
<dbReference type="OMA" id="CIMHGHG"/>
<dbReference type="OrthoDB" id="5795446at2"/>
<dbReference type="PhylomeDB" id="P0A8B2"/>
<dbReference type="BioCyc" id="EcoCyc:G7202-MONOMER"/>
<dbReference type="PRO" id="PR:P0A8B2"/>
<dbReference type="Proteomes" id="UP000000625">
    <property type="component" value="Chromosome"/>
</dbReference>
<dbReference type="GO" id="GO:0004521">
    <property type="term" value="F:RNA endonuclease activity"/>
    <property type="evidence" value="ECO:0000314"/>
    <property type="project" value="EcoCyc"/>
</dbReference>
<dbReference type="GO" id="GO:0019843">
    <property type="term" value="F:rRNA binding"/>
    <property type="evidence" value="ECO:0007669"/>
    <property type="project" value="UniProtKB-UniRule"/>
</dbReference>
<dbReference type="GO" id="GO:0072344">
    <property type="term" value="P:rescue of stalled ribosome"/>
    <property type="evidence" value="ECO:0000314"/>
    <property type="project" value="EcoCyc"/>
</dbReference>
<dbReference type="Gene3D" id="3.30.1370.110">
    <property type="match status" value="1"/>
</dbReference>
<dbReference type="HAMAP" id="MF_01042">
    <property type="entry name" value="SmrB"/>
    <property type="match status" value="1"/>
</dbReference>
<dbReference type="InterPro" id="IPR002625">
    <property type="entry name" value="Smr_dom"/>
</dbReference>
<dbReference type="InterPro" id="IPR036063">
    <property type="entry name" value="Smr_dom_sf"/>
</dbReference>
<dbReference type="InterPro" id="IPR022990">
    <property type="entry name" value="SmrB-like"/>
</dbReference>
<dbReference type="NCBIfam" id="NF003432">
    <property type="entry name" value="PRK04946.1"/>
    <property type="match status" value="1"/>
</dbReference>
<dbReference type="PANTHER" id="PTHR35562">
    <property type="entry name" value="DNA ENDONUCLEASE SMRA-RELATED"/>
    <property type="match status" value="1"/>
</dbReference>
<dbReference type="PANTHER" id="PTHR35562:SF1">
    <property type="entry name" value="UPF0115 PROTEIN YFCN"/>
    <property type="match status" value="1"/>
</dbReference>
<dbReference type="Pfam" id="PF01713">
    <property type="entry name" value="Smr"/>
    <property type="match status" value="1"/>
</dbReference>
<dbReference type="SMART" id="SM00463">
    <property type="entry name" value="SMR"/>
    <property type="match status" value="1"/>
</dbReference>
<dbReference type="SUPFAM" id="SSF160443">
    <property type="entry name" value="SMR domain-like"/>
    <property type="match status" value="1"/>
</dbReference>
<dbReference type="PROSITE" id="PS50828">
    <property type="entry name" value="SMR"/>
    <property type="match status" value="1"/>
</dbReference>